<proteinExistence type="evidence at transcript level"/>
<evidence type="ECO:0000250" key="1"/>
<evidence type="ECO:0000305" key="2"/>
<keyword id="KW-0028">Amino-acid biosynthesis</keyword>
<keyword id="KW-0198">Cysteine biosynthesis</keyword>
<keyword id="KW-0963">Cytoplasm</keyword>
<keyword id="KW-0663">Pyridoxal phosphate</keyword>
<keyword id="KW-0808">Transferase</keyword>
<dbReference type="EC" id="2.5.1.47"/>
<dbReference type="EMBL" id="Y10847">
    <property type="protein sequence ID" value="CAA71800.1"/>
    <property type="molecule type" value="mRNA"/>
</dbReference>
<dbReference type="SMR" id="O23735"/>
<dbReference type="EnsemblPlants" id="mRNA.BjuB05g44840S">
    <property type="protein sequence ID" value="cds.BjuB05g44840S"/>
    <property type="gene ID" value="BjuB05g44840S"/>
</dbReference>
<dbReference type="Gramene" id="mRNA.BjuB05g44840S">
    <property type="protein sequence ID" value="cds.BjuB05g44840S"/>
    <property type="gene ID" value="BjuB05g44840S"/>
</dbReference>
<dbReference type="UniPathway" id="UPA00136">
    <property type="reaction ID" value="UER00200"/>
</dbReference>
<dbReference type="GO" id="GO:0005737">
    <property type="term" value="C:cytoplasm"/>
    <property type="evidence" value="ECO:0007669"/>
    <property type="project" value="UniProtKB-SubCell"/>
</dbReference>
<dbReference type="GO" id="GO:0004124">
    <property type="term" value="F:cysteine synthase activity"/>
    <property type="evidence" value="ECO:0007669"/>
    <property type="project" value="UniProtKB-EC"/>
</dbReference>
<dbReference type="GO" id="GO:0006535">
    <property type="term" value="P:cysteine biosynthetic process from serine"/>
    <property type="evidence" value="ECO:0007669"/>
    <property type="project" value="InterPro"/>
</dbReference>
<dbReference type="CDD" id="cd01561">
    <property type="entry name" value="CBS_like"/>
    <property type="match status" value="1"/>
</dbReference>
<dbReference type="FunFam" id="3.40.50.1100:FF:000067">
    <property type="entry name" value="Cysteine synthase"/>
    <property type="match status" value="1"/>
</dbReference>
<dbReference type="FunFam" id="3.40.50.1100:FF:000130">
    <property type="entry name" value="Cysteine synthase"/>
    <property type="match status" value="1"/>
</dbReference>
<dbReference type="Gene3D" id="3.40.50.1100">
    <property type="match status" value="2"/>
</dbReference>
<dbReference type="InterPro" id="IPR005856">
    <property type="entry name" value="Cys_synth"/>
</dbReference>
<dbReference type="InterPro" id="IPR050214">
    <property type="entry name" value="Cys_Synth/Cystath_Beta-Synth"/>
</dbReference>
<dbReference type="InterPro" id="IPR005859">
    <property type="entry name" value="CysK"/>
</dbReference>
<dbReference type="InterPro" id="IPR001216">
    <property type="entry name" value="P-phosphate_BS"/>
</dbReference>
<dbReference type="InterPro" id="IPR001926">
    <property type="entry name" value="TrpB-like_PALP"/>
</dbReference>
<dbReference type="InterPro" id="IPR036052">
    <property type="entry name" value="TrpB-like_PALP_sf"/>
</dbReference>
<dbReference type="NCBIfam" id="TIGR01139">
    <property type="entry name" value="cysK"/>
    <property type="match status" value="1"/>
</dbReference>
<dbReference type="NCBIfam" id="TIGR01136">
    <property type="entry name" value="cysKM"/>
    <property type="match status" value="1"/>
</dbReference>
<dbReference type="PANTHER" id="PTHR10314">
    <property type="entry name" value="CYSTATHIONINE BETA-SYNTHASE"/>
    <property type="match status" value="1"/>
</dbReference>
<dbReference type="Pfam" id="PF00291">
    <property type="entry name" value="PALP"/>
    <property type="match status" value="1"/>
</dbReference>
<dbReference type="SUPFAM" id="SSF53686">
    <property type="entry name" value="Tryptophan synthase beta subunit-like PLP-dependent enzymes"/>
    <property type="match status" value="1"/>
</dbReference>
<dbReference type="PROSITE" id="PS00901">
    <property type="entry name" value="CYS_SYNTHASE"/>
    <property type="match status" value="1"/>
</dbReference>
<protein>
    <recommendedName>
        <fullName>Cysteine synthase</fullName>
        <shortName>CSase</shortName>
        <ecNumber>2.5.1.47</ecNumber>
    </recommendedName>
    <alternativeName>
        <fullName>O-acetylserine (thiol)-lyase</fullName>
        <shortName>OAS-TL</shortName>
    </alternativeName>
    <alternativeName>
        <fullName>O-acetylserine sulfhydrylase</fullName>
    </alternativeName>
    <alternativeName>
        <fullName>OAS-TL6</fullName>
    </alternativeName>
</protein>
<comment type="catalytic activity">
    <reaction>
        <text>O-acetyl-L-serine + hydrogen sulfide = L-cysteine + acetate</text>
        <dbReference type="Rhea" id="RHEA:14829"/>
        <dbReference type="ChEBI" id="CHEBI:29919"/>
        <dbReference type="ChEBI" id="CHEBI:30089"/>
        <dbReference type="ChEBI" id="CHEBI:35235"/>
        <dbReference type="ChEBI" id="CHEBI:58340"/>
        <dbReference type="EC" id="2.5.1.47"/>
    </reaction>
</comment>
<comment type="cofactor">
    <cofactor evidence="1">
        <name>pyridoxal 5'-phosphate</name>
        <dbReference type="ChEBI" id="CHEBI:597326"/>
    </cofactor>
</comment>
<comment type="pathway">
    <text>Amino-acid biosynthesis; L-cysteine biosynthesis; L-cysteine from L-serine: step 2/2.</text>
</comment>
<comment type="subunit">
    <text evidence="1">Homodimer.</text>
</comment>
<comment type="subcellular location">
    <subcellularLocation>
        <location evidence="1">Cytoplasm</location>
    </subcellularLocation>
</comment>
<comment type="similarity">
    <text evidence="2">Belongs to the cysteine synthase/cystathionine beta-synthase family.</text>
</comment>
<name>CYSK2_BRAJU</name>
<feature type="chain" id="PRO_0000167118" description="Cysteine synthase">
    <location>
        <begin position="1"/>
        <end position="324"/>
    </location>
</feature>
<feature type="binding site" evidence="1">
    <location>
        <position position="79"/>
    </location>
    <ligand>
        <name>pyridoxal 5'-phosphate</name>
        <dbReference type="ChEBI" id="CHEBI:597326"/>
    </ligand>
</feature>
<feature type="binding site" evidence="1">
    <location>
        <begin position="183"/>
        <end position="187"/>
    </location>
    <ligand>
        <name>pyridoxal 5'-phosphate</name>
        <dbReference type="ChEBI" id="CHEBI:597326"/>
    </ligand>
</feature>
<feature type="binding site" evidence="1">
    <location>
        <position position="271"/>
    </location>
    <ligand>
        <name>pyridoxal 5'-phosphate</name>
        <dbReference type="ChEBI" id="CHEBI:597326"/>
    </ligand>
</feature>
<feature type="modified residue" description="N6-(pyridoxal phosphate)lysine" evidence="1">
    <location>
        <position position="48"/>
    </location>
</feature>
<sequence>MASRIGIANDVTELIGNTPLVYLNSVAEGCVGRVAAKLEMMEPCSSVKDRIGFSMISDAEKKGLIKPGESVLIEPTSGNTGVGLAFTAAAKGYKLIITMPASMSIERRIILLAFGVELVLTDPAKGMKGAIAKAEEILAKTPNGYMLQQFENPANPKIHYETTGPEIWKGTEGKIDGFISGIGTGGTITGAGKYLKEQNPNVKLYGVEPVESAILSGGKPGPHKIQGIGAGFIPNVLETNLIDEVVQVSSDESIDMARLLAREEGLLVGISSGAAAAAAIKLAKRPENAGKLFVAVFPSFGERYLSTVLFDATRKEAESMTFEA</sequence>
<reference key="1">
    <citation type="journal article" date="1998" name="Plant Mol. Biol.">
        <title>cDNA cloning and expression analysis of genes encoding GSH synthesis in roots of the heavy-metal accumulator Brassica juncea L.: evidence for Cd-induction of a putative mitochondrial gamma-glutamylcysteine synthetase isoform.</title>
        <authorList>
            <person name="Schaefer H.J."/>
            <person name="Haag-Kerwer A."/>
            <person name="Rausch T.H."/>
        </authorList>
    </citation>
    <scope>NUCLEOTIDE SEQUENCE [MRNA]</scope>
    <source>
        <strain>cv. Vittasso</strain>
        <tissue>Root</tissue>
    </source>
</reference>
<accession>O23735</accession>
<organism>
    <name type="scientific">Brassica juncea</name>
    <name type="common">Indian mustard</name>
    <name type="synonym">Sinapis juncea</name>
    <dbReference type="NCBI Taxonomy" id="3707"/>
    <lineage>
        <taxon>Eukaryota</taxon>
        <taxon>Viridiplantae</taxon>
        <taxon>Streptophyta</taxon>
        <taxon>Embryophyta</taxon>
        <taxon>Tracheophyta</taxon>
        <taxon>Spermatophyta</taxon>
        <taxon>Magnoliopsida</taxon>
        <taxon>eudicotyledons</taxon>
        <taxon>Gunneridae</taxon>
        <taxon>Pentapetalae</taxon>
        <taxon>rosids</taxon>
        <taxon>malvids</taxon>
        <taxon>Brassicales</taxon>
        <taxon>Brassicaceae</taxon>
        <taxon>Brassiceae</taxon>
        <taxon>Brassica</taxon>
    </lineage>
</organism>